<feature type="signal peptide" evidence="2">
    <location>
        <begin position="1"/>
        <end status="unknown"/>
    </location>
</feature>
<feature type="chain" id="PRO_0000050566" description="Cysteine proteinase 3">
    <location>
        <begin status="unknown"/>
        <end position="43" status="greater than"/>
    </location>
</feature>
<feature type="active site" evidence="3">
    <location>
        <position position="25"/>
    </location>
</feature>
<feature type="non-terminal residue">
    <location>
        <position position="43"/>
    </location>
</feature>
<proteinExistence type="evidence at protein level"/>
<comment type="PTM">
    <text>Glycosylated.</text>
</comment>
<comment type="similarity">
    <text evidence="3 4 5">Belongs to the peptidase C1 family.</text>
</comment>
<dbReference type="EC" id="3.4.22.-" evidence="1"/>
<dbReference type="SMR" id="P32956"/>
<dbReference type="MEROPS" id="C01.020"/>
<dbReference type="GO" id="GO:0008234">
    <property type="term" value="F:cysteine-type peptidase activity"/>
    <property type="evidence" value="ECO:0007669"/>
    <property type="project" value="UniProtKB-KW"/>
</dbReference>
<dbReference type="GO" id="GO:0006508">
    <property type="term" value="P:proteolysis"/>
    <property type="evidence" value="ECO:0007669"/>
    <property type="project" value="UniProtKB-KW"/>
</dbReference>
<dbReference type="Gene3D" id="3.90.70.10">
    <property type="entry name" value="Cysteine proteinases"/>
    <property type="match status" value="1"/>
</dbReference>
<dbReference type="InterPro" id="IPR038765">
    <property type="entry name" value="Papain-like_cys_pep_sf"/>
</dbReference>
<dbReference type="InterPro" id="IPR000169">
    <property type="entry name" value="Pept_cys_AS"/>
</dbReference>
<dbReference type="InterPro" id="IPR013128">
    <property type="entry name" value="Peptidase_C1A"/>
</dbReference>
<dbReference type="InterPro" id="IPR000668">
    <property type="entry name" value="Peptidase_C1A_C"/>
</dbReference>
<dbReference type="PANTHER" id="PTHR12411">
    <property type="entry name" value="CYSTEINE PROTEASE FAMILY C1-RELATED"/>
    <property type="match status" value="1"/>
</dbReference>
<dbReference type="Pfam" id="PF00112">
    <property type="entry name" value="Peptidase_C1"/>
    <property type="match status" value="1"/>
</dbReference>
<dbReference type="SUPFAM" id="SSF54001">
    <property type="entry name" value="Cysteine proteinases"/>
    <property type="match status" value="1"/>
</dbReference>
<dbReference type="PROSITE" id="PS00139">
    <property type="entry name" value="THIOL_PROTEASE_CYS"/>
    <property type="match status" value="1"/>
</dbReference>
<sequence>YPESIDWRKKGAVTPVKNQGSCGSCWAFSTIATVEGINKIVHG</sequence>
<reference key="1">
    <citation type="journal article" date="1993" name="Biol. Chem. Hoppe-Seyler">
        <title>Isolation and preliminary characterization of the cysteine-proteinases from the latex of Carica candamarcensis Hook.</title>
        <authorList>
            <person name="Walreavens V."/>
            <person name="Jaziri M."/>
            <person name="van Beeumen J."/>
            <person name="Schnek A.G."/>
            <person name="Kleinschmidt T."/>
            <person name="Looze Y."/>
        </authorList>
    </citation>
    <scope>PROTEIN SEQUENCE</scope>
    <source>
        <tissue>Latex</tissue>
    </source>
</reference>
<keyword id="KW-0903">Direct protein sequencing</keyword>
<keyword id="KW-0325">Glycoprotein</keyword>
<keyword id="KW-0378">Hydrolase</keyword>
<keyword id="KW-0645">Protease</keyword>
<keyword id="KW-0732">Signal</keyword>
<keyword id="KW-0788">Thiol protease</keyword>
<organism>
    <name type="scientific">Vasconcellea cundinamarcensis</name>
    <name type="common">Mountain papaya</name>
    <name type="synonym">Carica candamarcensis</name>
    <dbReference type="NCBI Taxonomy" id="35926"/>
    <lineage>
        <taxon>Eukaryota</taxon>
        <taxon>Viridiplantae</taxon>
        <taxon>Streptophyta</taxon>
        <taxon>Embryophyta</taxon>
        <taxon>Tracheophyta</taxon>
        <taxon>Spermatophyta</taxon>
        <taxon>Magnoliopsida</taxon>
        <taxon>eudicotyledons</taxon>
        <taxon>Gunneridae</taxon>
        <taxon>Pentapetalae</taxon>
        <taxon>rosids</taxon>
        <taxon>malvids</taxon>
        <taxon>Brassicales</taxon>
        <taxon>Caricaceae</taxon>
        <taxon>Vasconcellea</taxon>
    </lineage>
</organism>
<accession>P32956</accession>
<name>CYSP3_VASCU</name>
<evidence type="ECO:0000250" key="1">
    <source>
        <dbReference type="UniProtKB" id="P80884"/>
    </source>
</evidence>
<evidence type="ECO:0000255" key="2"/>
<evidence type="ECO:0000255" key="3">
    <source>
        <dbReference type="PROSITE-ProRule" id="PRU10088"/>
    </source>
</evidence>
<evidence type="ECO:0000255" key="4">
    <source>
        <dbReference type="PROSITE-ProRule" id="PRU10089"/>
    </source>
</evidence>
<evidence type="ECO:0000255" key="5">
    <source>
        <dbReference type="PROSITE-ProRule" id="PRU10090"/>
    </source>
</evidence>
<protein>
    <recommendedName>
        <fullName>Cysteine proteinase 3</fullName>
        <ecNumber evidence="1">3.4.22.-</ecNumber>
    </recommendedName>
    <alternativeName>
        <fullName>CC-III</fullName>
    </alternativeName>
    <alternativeName>
        <fullName>Cysteine proteinase III</fullName>
    </alternativeName>
</protein>